<reference key="1">
    <citation type="submission" date="2009-01" db="EMBL/GenBank/DDBJ databases">
        <title>Complete sequence of Diaphorobacter sp. TPSY.</title>
        <authorList>
            <consortium name="US DOE Joint Genome Institute"/>
            <person name="Lucas S."/>
            <person name="Copeland A."/>
            <person name="Lapidus A."/>
            <person name="Glavina del Rio T."/>
            <person name="Tice H."/>
            <person name="Bruce D."/>
            <person name="Goodwin L."/>
            <person name="Pitluck S."/>
            <person name="Chertkov O."/>
            <person name="Brettin T."/>
            <person name="Detter J.C."/>
            <person name="Han C."/>
            <person name="Larimer F."/>
            <person name="Land M."/>
            <person name="Hauser L."/>
            <person name="Kyrpides N."/>
            <person name="Mikhailova N."/>
            <person name="Coates J.D."/>
        </authorList>
    </citation>
    <scope>NUCLEOTIDE SEQUENCE [LARGE SCALE GENOMIC DNA]</scope>
    <source>
        <strain>TPSY</strain>
    </source>
</reference>
<proteinExistence type="inferred from homology"/>
<sequence length="288" mass="31177">MAAGKEIRGKIKSVENTKKITKAMEMVAASKMRKAQDRMRAARPYAEKVRNIAAHLGEANPEYVHPFMKANDAKAAGIIVVTTDKGLCGGMNTNVLRAVTTKLRELQSTGVDVQSVAIGNKGLGFLNRVGAKVVAHATGLGDTPHLDKLIGPVKVLLDAYAEGKINAVYLSYTKFINTMKQESVVEQLLPLSSEQMQAQKTGHGWDYIYEPDAQSVIDELLVRYVESLIYQAVAENMASEQSARMVAMKAATDNAGNVINELKLVYNKTRQAAITKELSEIVAGAAAV</sequence>
<organism>
    <name type="scientific">Acidovorax ebreus (strain TPSY)</name>
    <name type="common">Diaphorobacter sp. (strain TPSY)</name>
    <dbReference type="NCBI Taxonomy" id="535289"/>
    <lineage>
        <taxon>Bacteria</taxon>
        <taxon>Pseudomonadati</taxon>
        <taxon>Pseudomonadota</taxon>
        <taxon>Betaproteobacteria</taxon>
        <taxon>Burkholderiales</taxon>
        <taxon>Comamonadaceae</taxon>
        <taxon>Diaphorobacter</taxon>
    </lineage>
</organism>
<keyword id="KW-0066">ATP synthesis</keyword>
<keyword id="KW-0997">Cell inner membrane</keyword>
<keyword id="KW-1003">Cell membrane</keyword>
<keyword id="KW-0139">CF(1)</keyword>
<keyword id="KW-0375">Hydrogen ion transport</keyword>
<keyword id="KW-0406">Ion transport</keyword>
<keyword id="KW-0472">Membrane</keyword>
<keyword id="KW-1185">Reference proteome</keyword>
<keyword id="KW-0813">Transport</keyword>
<gene>
    <name evidence="1" type="primary">atpG</name>
    <name type="ordered locus">Dtpsy_0302</name>
</gene>
<dbReference type="EMBL" id="CP001392">
    <property type="protein sequence ID" value="ACM31786.1"/>
    <property type="molecule type" value="Genomic_DNA"/>
</dbReference>
<dbReference type="RefSeq" id="WP_011803771.1">
    <property type="nucleotide sequence ID" value="NC_011992.1"/>
</dbReference>
<dbReference type="SMR" id="B9MBA2"/>
<dbReference type="GeneID" id="84683183"/>
<dbReference type="KEGG" id="dia:Dtpsy_0302"/>
<dbReference type="eggNOG" id="COG0224">
    <property type="taxonomic scope" value="Bacteria"/>
</dbReference>
<dbReference type="HOGENOM" id="CLU_050669_0_1_4"/>
<dbReference type="Proteomes" id="UP000000450">
    <property type="component" value="Chromosome"/>
</dbReference>
<dbReference type="GO" id="GO:0005886">
    <property type="term" value="C:plasma membrane"/>
    <property type="evidence" value="ECO:0007669"/>
    <property type="project" value="UniProtKB-SubCell"/>
</dbReference>
<dbReference type="GO" id="GO:0045259">
    <property type="term" value="C:proton-transporting ATP synthase complex"/>
    <property type="evidence" value="ECO:0007669"/>
    <property type="project" value="UniProtKB-KW"/>
</dbReference>
<dbReference type="GO" id="GO:0005524">
    <property type="term" value="F:ATP binding"/>
    <property type="evidence" value="ECO:0007669"/>
    <property type="project" value="UniProtKB-UniRule"/>
</dbReference>
<dbReference type="GO" id="GO:0046933">
    <property type="term" value="F:proton-transporting ATP synthase activity, rotational mechanism"/>
    <property type="evidence" value="ECO:0007669"/>
    <property type="project" value="UniProtKB-UniRule"/>
</dbReference>
<dbReference type="GO" id="GO:0042777">
    <property type="term" value="P:proton motive force-driven plasma membrane ATP synthesis"/>
    <property type="evidence" value="ECO:0007669"/>
    <property type="project" value="UniProtKB-UniRule"/>
</dbReference>
<dbReference type="CDD" id="cd12151">
    <property type="entry name" value="F1-ATPase_gamma"/>
    <property type="match status" value="1"/>
</dbReference>
<dbReference type="FunFam" id="1.10.287.80:FF:000005">
    <property type="entry name" value="ATP synthase gamma chain"/>
    <property type="match status" value="1"/>
</dbReference>
<dbReference type="Gene3D" id="3.40.1380.10">
    <property type="match status" value="1"/>
</dbReference>
<dbReference type="Gene3D" id="1.10.287.80">
    <property type="entry name" value="ATP synthase, gamma subunit, helix hairpin domain"/>
    <property type="match status" value="1"/>
</dbReference>
<dbReference type="HAMAP" id="MF_00815">
    <property type="entry name" value="ATP_synth_gamma_bact"/>
    <property type="match status" value="1"/>
</dbReference>
<dbReference type="InterPro" id="IPR035968">
    <property type="entry name" value="ATP_synth_F1_ATPase_gsu"/>
</dbReference>
<dbReference type="InterPro" id="IPR000131">
    <property type="entry name" value="ATP_synth_F1_gsu"/>
</dbReference>
<dbReference type="InterPro" id="IPR023632">
    <property type="entry name" value="ATP_synth_F1_gsu_CS"/>
</dbReference>
<dbReference type="NCBIfam" id="TIGR01146">
    <property type="entry name" value="ATPsyn_F1gamma"/>
    <property type="match status" value="1"/>
</dbReference>
<dbReference type="NCBIfam" id="NF004144">
    <property type="entry name" value="PRK05621.1-1"/>
    <property type="match status" value="1"/>
</dbReference>
<dbReference type="PANTHER" id="PTHR11693">
    <property type="entry name" value="ATP SYNTHASE GAMMA CHAIN"/>
    <property type="match status" value="1"/>
</dbReference>
<dbReference type="PANTHER" id="PTHR11693:SF22">
    <property type="entry name" value="ATP SYNTHASE SUBUNIT GAMMA, MITOCHONDRIAL"/>
    <property type="match status" value="1"/>
</dbReference>
<dbReference type="Pfam" id="PF00231">
    <property type="entry name" value="ATP-synt"/>
    <property type="match status" value="1"/>
</dbReference>
<dbReference type="PRINTS" id="PR00126">
    <property type="entry name" value="ATPASEGAMMA"/>
</dbReference>
<dbReference type="SUPFAM" id="SSF52943">
    <property type="entry name" value="ATP synthase (F1-ATPase), gamma subunit"/>
    <property type="match status" value="1"/>
</dbReference>
<dbReference type="PROSITE" id="PS00153">
    <property type="entry name" value="ATPASE_GAMMA"/>
    <property type="match status" value="1"/>
</dbReference>
<evidence type="ECO:0000255" key="1">
    <source>
        <dbReference type="HAMAP-Rule" id="MF_00815"/>
    </source>
</evidence>
<name>ATPG_ACIET</name>
<comment type="function">
    <text evidence="1">Produces ATP from ADP in the presence of a proton gradient across the membrane. The gamma chain is believed to be important in regulating ATPase activity and the flow of protons through the CF(0) complex.</text>
</comment>
<comment type="subunit">
    <text evidence="1">F-type ATPases have 2 components, CF(1) - the catalytic core - and CF(0) - the membrane proton channel. CF(1) has five subunits: alpha(3), beta(3), gamma(1), delta(1), epsilon(1). CF(0) has three main subunits: a, b and c.</text>
</comment>
<comment type="subcellular location">
    <subcellularLocation>
        <location evidence="1">Cell inner membrane</location>
        <topology evidence="1">Peripheral membrane protein</topology>
    </subcellularLocation>
</comment>
<comment type="similarity">
    <text evidence="1">Belongs to the ATPase gamma chain family.</text>
</comment>
<protein>
    <recommendedName>
        <fullName evidence="1">ATP synthase gamma chain</fullName>
    </recommendedName>
    <alternativeName>
        <fullName evidence="1">ATP synthase F1 sector gamma subunit</fullName>
    </alternativeName>
    <alternativeName>
        <fullName evidence="1">F-ATPase gamma subunit</fullName>
    </alternativeName>
</protein>
<accession>B9MBA2</accession>
<feature type="chain" id="PRO_1000148616" description="ATP synthase gamma chain">
    <location>
        <begin position="1"/>
        <end position="288"/>
    </location>
</feature>